<keyword id="KW-0150">Chloroplast</keyword>
<keyword id="KW-0472">Membrane</keyword>
<keyword id="KW-0602">Photosynthesis</keyword>
<keyword id="KW-0604">Photosystem II</keyword>
<keyword id="KW-0934">Plastid</keyword>
<keyword id="KW-0793">Thylakoid</keyword>
<keyword id="KW-0812">Transmembrane</keyword>
<keyword id="KW-1133">Transmembrane helix</keyword>
<organism>
    <name type="scientific">Trieres chinensis</name>
    <name type="common">Marine centric diatom</name>
    <name type="synonym">Odontella sinensis</name>
    <dbReference type="NCBI Taxonomy" id="1514140"/>
    <lineage>
        <taxon>Eukaryota</taxon>
        <taxon>Sar</taxon>
        <taxon>Stramenopiles</taxon>
        <taxon>Ochrophyta</taxon>
        <taxon>Bacillariophyta</taxon>
        <taxon>Mediophyceae</taxon>
        <taxon>Biddulphiophycidae</taxon>
        <taxon>Eupodiscales</taxon>
        <taxon>Parodontellaceae</taxon>
        <taxon>Trieres</taxon>
    </lineage>
</organism>
<protein>
    <recommendedName>
        <fullName evidence="1">Photosystem II reaction center protein T</fullName>
        <shortName evidence="1">PSII-T</shortName>
    </recommendedName>
</protein>
<gene>
    <name evidence="1" type="primary">psbT</name>
</gene>
<dbReference type="EMBL" id="Z67753">
    <property type="protein sequence ID" value="CAA91696.1"/>
    <property type="molecule type" value="Genomic_DNA"/>
</dbReference>
<dbReference type="PIR" id="S78323">
    <property type="entry name" value="S78323"/>
</dbReference>
<dbReference type="RefSeq" id="NP_043664.1">
    <property type="nucleotide sequence ID" value="NC_001713.1"/>
</dbReference>
<dbReference type="SMR" id="P49516"/>
<dbReference type="GeneID" id="801772"/>
<dbReference type="GO" id="GO:0009535">
    <property type="term" value="C:chloroplast thylakoid membrane"/>
    <property type="evidence" value="ECO:0007669"/>
    <property type="project" value="UniProtKB-SubCell"/>
</dbReference>
<dbReference type="GO" id="GO:0009539">
    <property type="term" value="C:photosystem II reaction center"/>
    <property type="evidence" value="ECO:0007669"/>
    <property type="project" value="InterPro"/>
</dbReference>
<dbReference type="GO" id="GO:0015979">
    <property type="term" value="P:photosynthesis"/>
    <property type="evidence" value="ECO:0007669"/>
    <property type="project" value="UniProtKB-UniRule"/>
</dbReference>
<dbReference type="HAMAP" id="MF_00808">
    <property type="entry name" value="PSII_PsbT"/>
    <property type="match status" value="1"/>
</dbReference>
<dbReference type="InterPro" id="IPR001743">
    <property type="entry name" value="PSII_PsbT"/>
</dbReference>
<dbReference type="InterPro" id="IPR037268">
    <property type="entry name" value="PSII_PsbT_sf"/>
</dbReference>
<dbReference type="PANTHER" id="PTHR36411">
    <property type="match status" value="1"/>
</dbReference>
<dbReference type="PANTHER" id="PTHR36411:SF2">
    <property type="entry name" value="PHOTOSYSTEM II REACTION CENTER PROTEIN T"/>
    <property type="match status" value="1"/>
</dbReference>
<dbReference type="Pfam" id="PF01405">
    <property type="entry name" value="PsbT"/>
    <property type="match status" value="1"/>
</dbReference>
<dbReference type="SUPFAM" id="SSF161029">
    <property type="entry name" value="Photosystem II reaction center protein T, PsbT"/>
    <property type="match status" value="1"/>
</dbReference>
<evidence type="ECO:0000255" key="1">
    <source>
        <dbReference type="HAMAP-Rule" id="MF_00808"/>
    </source>
</evidence>
<name>PSBT_TRICV</name>
<reference key="1">
    <citation type="journal article" date="1995" name="Plant Mol. Biol. Rep.">
        <title>The chloroplast genome of a chlorophyll a+c-containing alga, Odontella sinensis.</title>
        <authorList>
            <person name="Kowallik K.V."/>
            <person name="Stoebe B."/>
            <person name="Schaffran I."/>
            <person name="Kroth-Pancic P."/>
            <person name="Freier U."/>
        </authorList>
    </citation>
    <scope>NUCLEOTIDE SEQUENCE [LARGE SCALE GENOMIC DNA]</scope>
</reference>
<geneLocation type="chloroplast"/>
<proteinExistence type="inferred from homology"/>
<comment type="function">
    <text evidence="1">Found at the monomer-monomer interface of the photosystem II (PS II) dimer, plays a role in assembly and dimerization of PSII. PSII is a light-driven water plastoquinone oxidoreductase, using light energy to abstract electrons from H(2)O, generating a proton gradient subsequently used for ATP formation.</text>
</comment>
<comment type="subunit">
    <text evidence="1">PSII is composed of 1 copy each of membrane proteins PsbA, PsbB, PsbC, PsbD, PsbE, PsbF, PsbH, PsbI, PsbJ, PsbK, PsbL, PsbM, PsbT, PsbX, PsbY, PsbZ, Psb30/Ycf12, at least 3 peripheral proteins of the oxygen-evolving complex and a large number of cofactors. It forms dimeric complexes.</text>
</comment>
<comment type="subcellular location">
    <subcellularLocation>
        <location evidence="1">Plastid</location>
        <location evidence="1">Chloroplast thylakoid membrane</location>
        <topology evidence="1">Single-pass membrane protein</topology>
    </subcellularLocation>
</comment>
<comment type="similarity">
    <text evidence="1">Belongs to the PsbT family.</text>
</comment>
<feature type="chain" id="PRO_0000217959" description="Photosystem II reaction center protein T">
    <location>
        <begin position="1"/>
        <end position="32"/>
    </location>
</feature>
<feature type="transmembrane region" description="Helical" evidence="1">
    <location>
        <begin position="3"/>
        <end position="23"/>
    </location>
</feature>
<sequence>MEALVYTFLLIGTLMVIFFAVFFRETPRILRK</sequence>
<accession>P49516</accession>